<sequence>MQNITDSWFVQGMIKATSDAWLKGWDERNGGNLTLRLDEADIAPFSADFHEKPRYITLSQLMPLLANTPFIVTGSGKFFRNVQLDPAANLGVVKIDSDGAGYHILWGLTHDAVPTSELPAHFLSHCERIKATHGKDRVIMHCHATNLIALTYVLENNTALITRKLWEGSTECLVVFPDGVGILPWMVPGPDEIGQATAQEMQKHSLVLWPFHGVFGSGPTLNETFGLIDTAEKSAEVLVKIYSMGGMKQTITREELVALGKRFGVTPLASAVELY</sequence>
<comment type="function">
    <text evidence="1">Catalyzes the reversible cleavage of L-rhamnulose-1-phosphate to dihydroxyacetone phosphate (DHAP) and L-lactaldehyde.</text>
</comment>
<comment type="catalytic activity">
    <reaction evidence="1">
        <text>L-rhamnulose 1-phosphate = (S)-lactaldehyde + dihydroxyacetone phosphate</text>
        <dbReference type="Rhea" id="RHEA:19689"/>
        <dbReference type="ChEBI" id="CHEBI:18041"/>
        <dbReference type="ChEBI" id="CHEBI:57642"/>
        <dbReference type="ChEBI" id="CHEBI:58313"/>
        <dbReference type="EC" id="4.1.2.19"/>
    </reaction>
</comment>
<comment type="cofactor">
    <cofactor evidence="1">
        <name>Zn(2+)</name>
        <dbReference type="ChEBI" id="CHEBI:29105"/>
    </cofactor>
    <text evidence="1">Binds 1 zinc ion per subunit.</text>
</comment>
<comment type="pathway">
    <text evidence="1">Carbohydrate degradation; L-rhamnose degradation; glycerone phosphate from L-rhamnose: step 3/3.</text>
</comment>
<comment type="subunit">
    <text evidence="1">Homotetramer.</text>
</comment>
<comment type="subcellular location">
    <subcellularLocation>
        <location evidence="1">Cytoplasm</location>
    </subcellularLocation>
</comment>
<comment type="similarity">
    <text evidence="1">Belongs to the aldolase class II family. RhaD subfamily.</text>
</comment>
<comment type="caution">
    <text evidence="2">Could be the product of a pseudogene.</text>
</comment>
<comment type="sequence caution" evidence="2">
    <conflict type="frameshift">
        <sequence resource="EMBL" id="AE014613"/>
    </conflict>
</comment>
<comment type="sequence caution" evidence="2">
    <conflict type="frameshift">
        <sequence resource="EMBL" id="AL513382"/>
    </conflict>
</comment>
<organism>
    <name type="scientific">Salmonella typhi</name>
    <dbReference type="NCBI Taxonomy" id="90370"/>
    <lineage>
        <taxon>Bacteria</taxon>
        <taxon>Pseudomonadati</taxon>
        <taxon>Pseudomonadota</taxon>
        <taxon>Gammaproteobacteria</taxon>
        <taxon>Enterobacterales</taxon>
        <taxon>Enterobacteriaceae</taxon>
        <taxon>Salmonella</taxon>
    </lineage>
</organism>
<proteinExistence type="uncertain"/>
<name>RHAD_SALTI</name>
<gene>
    <name evidence="1" type="primary">rhaD</name>
    <name type="ordered locus">STY3828</name>
    <name type="ordered locus">t3574</name>
</gene>
<protein>
    <recommendedName>
        <fullName>Putative rhamnulose-1-phosphate aldolase</fullName>
        <ecNumber evidence="1">4.1.2.19</ecNumber>
    </recommendedName>
</protein>
<feature type="chain" id="PRO_0000209669" description="Putative rhamnulose-1-phosphate aldolase">
    <location>
        <begin position="1"/>
        <end position="275"/>
    </location>
</feature>
<feature type="active site" evidence="1">
    <location>
        <position position="117"/>
    </location>
</feature>
<feature type="binding site" evidence="1">
    <location>
        <position position="141"/>
    </location>
    <ligand>
        <name>Zn(2+)</name>
        <dbReference type="ChEBI" id="CHEBI:29105"/>
    </ligand>
</feature>
<feature type="binding site" evidence="1">
    <location>
        <position position="143"/>
    </location>
    <ligand>
        <name>Zn(2+)</name>
        <dbReference type="ChEBI" id="CHEBI:29105"/>
    </ligand>
</feature>
<feature type="binding site" evidence="1">
    <location>
        <position position="212"/>
    </location>
    <ligand>
        <name>Zn(2+)</name>
        <dbReference type="ChEBI" id="CHEBI:29105"/>
    </ligand>
</feature>
<keyword id="KW-0963">Cytoplasm</keyword>
<keyword id="KW-0456">Lyase</keyword>
<keyword id="KW-0479">Metal-binding</keyword>
<keyword id="KW-0684">Rhamnose metabolism</keyword>
<keyword id="KW-0862">Zinc</keyword>
<reference key="1">
    <citation type="journal article" date="2001" name="Nature">
        <title>Complete genome sequence of a multiple drug resistant Salmonella enterica serovar Typhi CT18.</title>
        <authorList>
            <person name="Parkhill J."/>
            <person name="Dougan G."/>
            <person name="James K.D."/>
            <person name="Thomson N.R."/>
            <person name="Pickard D."/>
            <person name="Wain J."/>
            <person name="Churcher C.M."/>
            <person name="Mungall K.L."/>
            <person name="Bentley S.D."/>
            <person name="Holden M.T.G."/>
            <person name="Sebaihia M."/>
            <person name="Baker S."/>
            <person name="Basham D."/>
            <person name="Brooks K."/>
            <person name="Chillingworth T."/>
            <person name="Connerton P."/>
            <person name="Cronin A."/>
            <person name="Davis P."/>
            <person name="Davies R.M."/>
            <person name="Dowd L."/>
            <person name="White N."/>
            <person name="Farrar J."/>
            <person name="Feltwell T."/>
            <person name="Hamlin N."/>
            <person name="Haque A."/>
            <person name="Hien T.T."/>
            <person name="Holroyd S."/>
            <person name="Jagels K."/>
            <person name="Krogh A."/>
            <person name="Larsen T.S."/>
            <person name="Leather S."/>
            <person name="Moule S."/>
            <person name="O'Gaora P."/>
            <person name="Parry C."/>
            <person name="Quail M.A."/>
            <person name="Rutherford K.M."/>
            <person name="Simmonds M."/>
            <person name="Skelton J."/>
            <person name="Stevens K."/>
            <person name="Whitehead S."/>
            <person name="Barrell B.G."/>
        </authorList>
    </citation>
    <scope>NUCLEOTIDE SEQUENCE [LARGE SCALE GENOMIC DNA]</scope>
    <source>
        <strain>CT18</strain>
    </source>
</reference>
<reference key="2">
    <citation type="journal article" date="2003" name="J. Bacteriol.">
        <title>Comparative genomics of Salmonella enterica serovar Typhi strains Ty2 and CT18.</title>
        <authorList>
            <person name="Deng W."/>
            <person name="Liou S.-R."/>
            <person name="Plunkett G. III"/>
            <person name="Mayhew G.F."/>
            <person name="Rose D.J."/>
            <person name="Burland V."/>
            <person name="Kodoyianni V."/>
            <person name="Schwartz D.C."/>
            <person name="Blattner F.R."/>
        </authorList>
    </citation>
    <scope>NUCLEOTIDE SEQUENCE [LARGE SCALE GENOMIC DNA]</scope>
    <source>
        <strain>ATCC 700931 / Ty2</strain>
    </source>
</reference>
<accession>P69737</accession>
<dbReference type="EC" id="4.1.2.19" evidence="1"/>
<dbReference type="EMBL" id="AL513382">
    <property type="status" value="NOT_ANNOTATED_CDS"/>
    <property type="molecule type" value="Genomic_DNA"/>
</dbReference>
<dbReference type="EMBL" id="AE014613">
    <property type="status" value="NOT_ANNOTATED_CDS"/>
    <property type="molecule type" value="Genomic_DNA"/>
</dbReference>
<dbReference type="SMR" id="P69737"/>
<dbReference type="OMA" id="SHFMSHI"/>
<dbReference type="UniPathway" id="UPA00541">
    <property type="reaction ID" value="UER00603"/>
</dbReference>
<dbReference type="Proteomes" id="UP000000541">
    <property type="component" value="Chromosome"/>
</dbReference>
<dbReference type="Proteomes" id="UP000002670">
    <property type="component" value="Chromosome"/>
</dbReference>
<dbReference type="GO" id="GO:0005829">
    <property type="term" value="C:cytosol"/>
    <property type="evidence" value="ECO:0007669"/>
    <property type="project" value="TreeGrafter"/>
</dbReference>
<dbReference type="GO" id="GO:0046872">
    <property type="term" value="F:metal ion binding"/>
    <property type="evidence" value="ECO:0007669"/>
    <property type="project" value="UniProtKB-KW"/>
</dbReference>
<dbReference type="GO" id="GO:0008994">
    <property type="term" value="F:rhamnulose-1-phosphate aldolase activity"/>
    <property type="evidence" value="ECO:0007669"/>
    <property type="project" value="UniProtKB-UniRule"/>
</dbReference>
<dbReference type="GO" id="GO:0019323">
    <property type="term" value="P:pentose catabolic process"/>
    <property type="evidence" value="ECO:0007669"/>
    <property type="project" value="TreeGrafter"/>
</dbReference>
<dbReference type="GO" id="GO:0019301">
    <property type="term" value="P:rhamnose catabolic process"/>
    <property type="evidence" value="ECO:0007669"/>
    <property type="project" value="UniProtKB-UniRule"/>
</dbReference>
<dbReference type="FunFam" id="3.40.225.10:FF:000006">
    <property type="entry name" value="Rhamnulose-1-phosphate aldolase"/>
    <property type="match status" value="1"/>
</dbReference>
<dbReference type="Gene3D" id="3.40.225.10">
    <property type="entry name" value="Class II aldolase/adducin N-terminal domain"/>
    <property type="match status" value="1"/>
</dbReference>
<dbReference type="HAMAP" id="MF_00770">
    <property type="entry name" value="RhaD"/>
    <property type="match status" value="1"/>
</dbReference>
<dbReference type="InterPro" id="IPR050197">
    <property type="entry name" value="Aldolase_class_II_sugar_metab"/>
</dbReference>
<dbReference type="InterPro" id="IPR001303">
    <property type="entry name" value="Aldolase_II/adducin_N"/>
</dbReference>
<dbReference type="InterPro" id="IPR036409">
    <property type="entry name" value="Aldolase_II/adducin_N_sf"/>
</dbReference>
<dbReference type="InterPro" id="IPR013447">
    <property type="entry name" value="Rhamnulose-1-P_Aldolase"/>
</dbReference>
<dbReference type="NCBIfam" id="NF002963">
    <property type="entry name" value="PRK03634.1"/>
    <property type="match status" value="1"/>
</dbReference>
<dbReference type="NCBIfam" id="TIGR02624">
    <property type="entry name" value="rhamnu_1P_ald"/>
    <property type="match status" value="1"/>
</dbReference>
<dbReference type="PANTHER" id="PTHR22789">
    <property type="entry name" value="FUCULOSE PHOSPHATE ALDOLASE"/>
    <property type="match status" value="1"/>
</dbReference>
<dbReference type="PANTHER" id="PTHR22789:SF16">
    <property type="entry name" value="RHAMNULOSE-1-PHOSPHATE ALDOLASE"/>
    <property type="match status" value="1"/>
</dbReference>
<dbReference type="Pfam" id="PF00596">
    <property type="entry name" value="Aldolase_II"/>
    <property type="match status" value="1"/>
</dbReference>
<dbReference type="SMART" id="SM01007">
    <property type="entry name" value="Aldolase_II"/>
    <property type="match status" value="1"/>
</dbReference>
<dbReference type="SUPFAM" id="SSF53639">
    <property type="entry name" value="AraD/HMP-PK domain-like"/>
    <property type="match status" value="1"/>
</dbReference>
<evidence type="ECO:0000255" key="1">
    <source>
        <dbReference type="HAMAP-Rule" id="MF_00770"/>
    </source>
</evidence>
<evidence type="ECO:0000305" key="2"/>